<name>GUAAB_METKA</name>
<keyword id="KW-0067">ATP-binding</keyword>
<keyword id="KW-0332">GMP biosynthesis</keyword>
<keyword id="KW-0436">Ligase</keyword>
<keyword id="KW-0547">Nucleotide-binding</keyword>
<keyword id="KW-0658">Purine biosynthesis</keyword>
<keyword id="KW-1185">Reference proteome</keyword>
<dbReference type="EC" id="6.3.5.2"/>
<dbReference type="EMBL" id="AE009439">
    <property type="protein sequence ID" value="AAM01578.1"/>
    <property type="molecule type" value="Genomic_DNA"/>
</dbReference>
<dbReference type="RefSeq" id="WP_011018733.1">
    <property type="nucleotide sequence ID" value="NC_003551.1"/>
</dbReference>
<dbReference type="SMR" id="Q8TYD7"/>
<dbReference type="FunCoup" id="Q8TYD7">
    <property type="interactions" value="199"/>
</dbReference>
<dbReference type="STRING" id="190192.MK0363"/>
<dbReference type="PaxDb" id="190192-MK0363"/>
<dbReference type="EnsemblBacteria" id="AAM01578">
    <property type="protein sequence ID" value="AAM01578"/>
    <property type="gene ID" value="MK0363"/>
</dbReference>
<dbReference type="GeneID" id="1477666"/>
<dbReference type="KEGG" id="mka:MK0363"/>
<dbReference type="PATRIC" id="fig|190192.8.peg.385"/>
<dbReference type="HOGENOM" id="CLU_014340_0_0_2"/>
<dbReference type="InParanoid" id="Q8TYD7"/>
<dbReference type="OrthoDB" id="33844at2157"/>
<dbReference type="UniPathway" id="UPA00189">
    <property type="reaction ID" value="UER00296"/>
</dbReference>
<dbReference type="Proteomes" id="UP000001826">
    <property type="component" value="Chromosome"/>
</dbReference>
<dbReference type="GO" id="GO:0005829">
    <property type="term" value="C:cytosol"/>
    <property type="evidence" value="ECO:0007669"/>
    <property type="project" value="TreeGrafter"/>
</dbReference>
<dbReference type="GO" id="GO:0005524">
    <property type="term" value="F:ATP binding"/>
    <property type="evidence" value="ECO:0007669"/>
    <property type="project" value="UniProtKB-UniRule"/>
</dbReference>
<dbReference type="GO" id="GO:0004810">
    <property type="term" value="F:CCA tRNA nucleotidyltransferase activity"/>
    <property type="evidence" value="ECO:0007669"/>
    <property type="project" value="InterPro"/>
</dbReference>
<dbReference type="GO" id="GO:0003921">
    <property type="term" value="F:GMP synthase activity"/>
    <property type="evidence" value="ECO:0007669"/>
    <property type="project" value="InterPro"/>
</dbReference>
<dbReference type="CDD" id="cd01997">
    <property type="entry name" value="GMP_synthase_C"/>
    <property type="match status" value="1"/>
</dbReference>
<dbReference type="FunFam" id="3.30.300.10:FF:000002">
    <property type="entry name" value="GMP synthase [glutamine-hydrolyzing]"/>
    <property type="match status" value="1"/>
</dbReference>
<dbReference type="FunFam" id="3.40.50.620:FF:000208">
    <property type="entry name" value="GMP synthase [glutamine-hydrolyzing] subunit B"/>
    <property type="match status" value="1"/>
</dbReference>
<dbReference type="Gene3D" id="3.30.300.10">
    <property type="match status" value="1"/>
</dbReference>
<dbReference type="Gene3D" id="3.40.50.620">
    <property type="entry name" value="HUPs"/>
    <property type="match status" value="1"/>
</dbReference>
<dbReference type="HAMAP" id="MF_00345">
    <property type="entry name" value="GMP_synthase_B"/>
    <property type="match status" value="1"/>
</dbReference>
<dbReference type="InterPro" id="IPR001674">
    <property type="entry name" value="GMP_synth_C"/>
</dbReference>
<dbReference type="InterPro" id="IPR026598">
    <property type="entry name" value="GMP_synthase_B"/>
</dbReference>
<dbReference type="InterPro" id="IPR025777">
    <property type="entry name" value="GMPS_ATP_PPase_dom"/>
</dbReference>
<dbReference type="InterPro" id="IPR014729">
    <property type="entry name" value="Rossmann-like_a/b/a_fold"/>
</dbReference>
<dbReference type="InterPro" id="IPR020536">
    <property type="entry name" value="ThiI_AANH"/>
</dbReference>
<dbReference type="NCBIfam" id="TIGR00884">
    <property type="entry name" value="guaA_Cterm"/>
    <property type="match status" value="1"/>
</dbReference>
<dbReference type="NCBIfam" id="NF000848">
    <property type="entry name" value="PRK00074.1"/>
    <property type="match status" value="1"/>
</dbReference>
<dbReference type="PANTHER" id="PTHR11922:SF2">
    <property type="entry name" value="GMP SYNTHASE [GLUTAMINE-HYDROLYZING]"/>
    <property type="match status" value="1"/>
</dbReference>
<dbReference type="PANTHER" id="PTHR11922">
    <property type="entry name" value="GMP SYNTHASE-RELATED"/>
    <property type="match status" value="1"/>
</dbReference>
<dbReference type="Pfam" id="PF00958">
    <property type="entry name" value="GMP_synt_C"/>
    <property type="match status" value="1"/>
</dbReference>
<dbReference type="Pfam" id="PF02568">
    <property type="entry name" value="ThiI"/>
    <property type="match status" value="1"/>
</dbReference>
<dbReference type="SUPFAM" id="SSF52402">
    <property type="entry name" value="Adenine nucleotide alpha hydrolases-like"/>
    <property type="match status" value="1"/>
</dbReference>
<dbReference type="SUPFAM" id="SSF54810">
    <property type="entry name" value="GMP synthetase C-terminal dimerisation domain"/>
    <property type="match status" value="1"/>
</dbReference>
<dbReference type="PROSITE" id="PS51553">
    <property type="entry name" value="GMPS_ATP_PPASE"/>
    <property type="match status" value="1"/>
</dbReference>
<sequence length="314" mass="35327">MFDPKKFVEEAIEELRREIGDRKAIIAVSGGVDSTTAAVLTHRAIGSHLVCVFVDHGFMRKGEPERIRELLEEELGLNLRFVEAAEEFFEALRGVTDPEEKRKIIGEKFIEVFERIAEEEEAEVLVQGTIAPDIIESERGIKSHHNVGGLPEKLNLDVVEPLRDLYKDEVREVARYLGIPDEIVERMPFPGPGLAVRVLGEVTPEKVEIVREANAIVEEEVEKAVEEGKMSKPWQAFAALLDCKATGVKGDERDYGWVIAVRIVESIDAMIADVPEVPWEVLRNIQDRITSEVPEVTRVLFDITPKPPATIEFE</sequence>
<proteinExistence type="inferred from homology"/>
<feature type="chain" id="PRO_0000140242" description="GMP synthase [glutamine-hydrolyzing] subunit B">
    <location>
        <begin position="1"/>
        <end position="314"/>
    </location>
</feature>
<feature type="domain" description="GMPS ATP-PPase">
    <location>
        <begin position="2"/>
        <end position="186"/>
    </location>
</feature>
<feature type="binding site" evidence="1">
    <location>
        <begin position="29"/>
        <end position="35"/>
    </location>
    <ligand>
        <name>ATP</name>
        <dbReference type="ChEBI" id="CHEBI:30616"/>
    </ligand>
</feature>
<evidence type="ECO:0000250" key="1"/>
<evidence type="ECO:0000305" key="2"/>
<organism>
    <name type="scientific">Methanopyrus kandleri (strain AV19 / DSM 6324 / JCM 9639 / NBRC 100938)</name>
    <dbReference type="NCBI Taxonomy" id="190192"/>
    <lineage>
        <taxon>Archaea</taxon>
        <taxon>Methanobacteriati</taxon>
        <taxon>Methanobacteriota</taxon>
        <taxon>Methanomada group</taxon>
        <taxon>Methanopyri</taxon>
        <taxon>Methanopyrales</taxon>
        <taxon>Methanopyraceae</taxon>
        <taxon>Methanopyrus</taxon>
    </lineage>
</organism>
<comment type="function">
    <text evidence="1">Catalyzes the synthesis of GMP from XMP.</text>
</comment>
<comment type="catalytic activity">
    <reaction>
        <text>XMP + L-glutamine + ATP + H2O = GMP + L-glutamate + AMP + diphosphate + 2 H(+)</text>
        <dbReference type="Rhea" id="RHEA:11680"/>
        <dbReference type="ChEBI" id="CHEBI:15377"/>
        <dbReference type="ChEBI" id="CHEBI:15378"/>
        <dbReference type="ChEBI" id="CHEBI:29985"/>
        <dbReference type="ChEBI" id="CHEBI:30616"/>
        <dbReference type="ChEBI" id="CHEBI:33019"/>
        <dbReference type="ChEBI" id="CHEBI:57464"/>
        <dbReference type="ChEBI" id="CHEBI:58115"/>
        <dbReference type="ChEBI" id="CHEBI:58359"/>
        <dbReference type="ChEBI" id="CHEBI:456215"/>
        <dbReference type="EC" id="6.3.5.2"/>
    </reaction>
</comment>
<comment type="pathway">
    <text>Purine metabolism; GMP biosynthesis; GMP from XMP (L-Gln route): step 1/1.</text>
</comment>
<comment type="subunit">
    <text evidence="2">Heterodimer composed of a glutamine amidotransferase subunit (A) and a GMP-binding subunit (B).</text>
</comment>
<gene>
    <name type="primary">guaAB</name>
    <name type="synonym">guaA_1</name>
    <name type="ordered locus">MK0363</name>
</gene>
<protein>
    <recommendedName>
        <fullName>GMP synthase [glutamine-hydrolyzing] subunit B</fullName>
        <ecNumber>6.3.5.2</ecNumber>
    </recommendedName>
    <alternativeName>
        <fullName>GMP synthetase</fullName>
    </alternativeName>
</protein>
<reference key="1">
    <citation type="journal article" date="2002" name="Proc. Natl. Acad. Sci. U.S.A.">
        <title>The complete genome of hyperthermophile Methanopyrus kandleri AV19 and monophyly of archaeal methanogens.</title>
        <authorList>
            <person name="Slesarev A.I."/>
            <person name="Mezhevaya K.V."/>
            <person name="Makarova K.S."/>
            <person name="Polushin N.N."/>
            <person name="Shcherbinina O.V."/>
            <person name="Shakhova V.V."/>
            <person name="Belova G.I."/>
            <person name="Aravind L."/>
            <person name="Natale D.A."/>
            <person name="Rogozin I.B."/>
            <person name="Tatusov R.L."/>
            <person name="Wolf Y.I."/>
            <person name="Stetter K.O."/>
            <person name="Malykh A.G."/>
            <person name="Koonin E.V."/>
            <person name="Kozyavkin S.A."/>
        </authorList>
    </citation>
    <scope>NUCLEOTIDE SEQUENCE [LARGE SCALE GENOMIC DNA]</scope>
    <source>
        <strain>AV19 / DSM 6324 / JCM 9639 / NBRC 100938</strain>
    </source>
</reference>
<accession>Q8TYD7</accession>